<name>UREG_SYNJA</name>
<organism>
    <name type="scientific">Synechococcus sp. (strain JA-3-3Ab)</name>
    <name type="common">Cyanobacteria bacterium Yellowstone A-Prime</name>
    <dbReference type="NCBI Taxonomy" id="321327"/>
    <lineage>
        <taxon>Bacteria</taxon>
        <taxon>Bacillati</taxon>
        <taxon>Cyanobacteriota</taxon>
        <taxon>Cyanophyceae</taxon>
        <taxon>Synechococcales</taxon>
        <taxon>Synechococcaceae</taxon>
        <taxon>Synechococcus</taxon>
    </lineage>
</organism>
<keyword id="KW-0143">Chaperone</keyword>
<keyword id="KW-0963">Cytoplasm</keyword>
<keyword id="KW-0342">GTP-binding</keyword>
<keyword id="KW-0996">Nickel insertion</keyword>
<keyword id="KW-0547">Nucleotide-binding</keyword>
<feature type="chain" id="PRO_1000145242" description="Urease accessory protein UreG">
    <location>
        <begin position="1"/>
        <end position="202"/>
    </location>
</feature>
<feature type="binding site" evidence="1">
    <location>
        <begin position="10"/>
        <end position="17"/>
    </location>
    <ligand>
        <name>GTP</name>
        <dbReference type="ChEBI" id="CHEBI:37565"/>
    </ligand>
</feature>
<dbReference type="EMBL" id="CP000239">
    <property type="protein sequence ID" value="ABC98822.1"/>
    <property type="molecule type" value="Genomic_DNA"/>
</dbReference>
<dbReference type="SMR" id="Q2JWN7"/>
<dbReference type="STRING" id="321327.CYA_0606"/>
<dbReference type="KEGG" id="cya:CYA_0606"/>
<dbReference type="eggNOG" id="COG0378">
    <property type="taxonomic scope" value="Bacteria"/>
</dbReference>
<dbReference type="HOGENOM" id="CLU_072144_1_0_3"/>
<dbReference type="OrthoDB" id="9802035at2"/>
<dbReference type="Proteomes" id="UP000008818">
    <property type="component" value="Chromosome"/>
</dbReference>
<dbReference type="GO" id="GO:0005737">
    <property type="term" value="C:cytoplasm"/>
    <property type="evidence" value="ECO:0007669"/>
    <property type="project" value="UniProtKB-SubCell"/>
</dbReference>
<dbReference type="GO" id="GO:0005525">
    <property type="term" value="F:GTP binding"/>
    <property type="evidence" value="ECO:0007669"/>
    <property type="project" value="UniProtKB-KW"/>
</dbReference>
<dbReference type="GO" id="GO:0003924">
    <property type="term" value="F:GTPase activity"/>
    <property type="evidence" value="ECO:0007669"/>
    <property type="project" value="InterPro"/>
</dbReference>
<dbReference type="GO" id="GO:0016151">
    <property type="term" value="F:nickel cation binding"/>
    <property type="evidence" value="ECO:0007669"/>
    <property type="project" value="UniProtKB-UniRule"/>
</dbReference>
<dbReference type="GO" id="GO:0043419">
    <property type="term" value="P:urea catabolic process"/>
    <property type="evidence" value="ECO:0007669"/>
    <property type="project" value="InterPro"/>
</dbReference>
<dbReference type="CDD" id="cd05540">
    <property type="entry name" value="UreG"/>
    <property type="match status" value="1"/>
</dbReference>
<dbReference type="FunFam" id="3.40.50.300:FF:000208">
    <property type="entry name" value="Urease accessory protein UreG"/>
    <property type="match status" value="1"/>
</dbReference>
<dbReference type="Gene3D" id="3.40.50.300">
    <property type="entry name" value="P-loop containing nucleotide triphosphate hydrolases"/>
    <property type="match status" value="1"/>
</dbReference>
<dbReference type="HAMAP" id="MF_01389">
    <property type="entry name" value="UreG"/>
    <property type="match status" value="1"/>
</dbReference>
<dbReference type="InterPro" id="IPR003495">
    <property type="entry name" value="CobW/HypB/UreG_nucleotide-bd"/>
</dbReference>
<dbReference type="InterPro" id="IPR027417">
    <property type="entry name" value="P-loop_NTPase"/>
</dbReference>
<dbReference type="InterPro" id="IPR004400">
    <property type="entry name" value="UreG"/>
</dbReference>
<dbReference type="NCBIfam" id="TIGR00101">
    <property type="entry name" value="ureG"/>
    <property type="match status" value="1"/>
</dbReference>
<dbReference type="PANTHER" id="PTHR31715">
    <property type="entry name" value="UREASE ACCESSORY PROTEIN G"/>
    <property type="match status" value="1"/>
</dbReference>
<dbReference type="PANTHER" id="PTHR31715:SF0">
    <property type="entry name" value="UREASE ACCESSORY PROTEIN G"/>
    <property type="match status" value="1"/>
</dbReference>
<dbReference type="Pfam" id="PF02492">
    <property type="entry name" value="cobW"/>
    <property type="match status" value="1"/>
</dbReference>
<dbReference type="PIRSF" id="PIRSF005624">
    <property type="entry name" value="Ni-bind_GTPase"/>
    <property type="match status" value="1"/>
</dbReference>
<dbReference type="SUPFAM" id="SSF52540">
    <property type="entry name" value="P-loop containing nucleoside triphosphate hydrolases"/>
    <property type="match status" value="1"/>
</dbReference>
<protein>
    <recommendedName>
        <fullName evidence="1">Urease accessory protein UreG</fullName>
    </recommendedName>
</protein>
<evidence type="ECO:0000255" key="1">
    <source>
        <dbReference type="HAMAP-Rule" id="MF_01389"/>
    </source>
</evidence>
<gene>
    <name evidence="1" type="primary">ureG</name>
    <name type="ordered locus">CYA_0606</name>
</gene>
<reference key="1">
    <citation type="journal article" date="2007" name="ISME J.">
        <title>Population level functional diversity in a microbial community revealed by comparative genomic and metagenomic analyses.</title>
        <authorList>
            <person name="Bhaya D."/>
            <person name="Grossman A.R."/>
            <person name="Steunou A.-S."/>
            <person name="Khuri N."/>
            <person name="Cohan F.M."/>
            <person name="Hamamura N."/>
            <person name="Melendrez M.C."/>
            <person name="Bateson M.M."/>
            <person name="Ward D.M."/>
            <person name="Heidelberg J.F."/>
        </authorList>
    </citation>
    <scope>NUCLEOTIDE SEQUENCE [LARGE SCALE GENOMIC DNA]</scope>
    <source>
        <strain>JA-3-3Ab</strain>
    </source>
</reference>
<sequence>MKPVKIGVAGPVGSGKTALIDRLAKAMRDRYNLAVITNDVYTYEDAEFLVRSGALPPERIAGVRTGGCPHTAIREDPAANQEAVEAMLARFLDLDILFLESGGDNLAASFSPELVDVWIYVIDVAAGDKIPRKGGPGIEKSHLLVINKIDLAPLVGADLGVMERDTRLKRGSRPWVFTNLKTGEGLDSVVEWIRREVLFEGD</sequence>
<accession>Q2JWN7</accession>
<proteinExistence type="inferred from homology"/>
<comment type="function">
    <text evidence="1">Facilitates the functional incorporation of the urease nickel metallocenter. This process requires GTP hydrolysis, probably effectuated by UreG.</text>
</comment>
<comment type="subunit">
    <text evidence="1">Homodimer. UreD, UreF and UreG form a complex that acts as a GTP-hydrolysis-dependent molecular chaperone, activating the urease apoprotein by helping to assemble the nickel containing metallocenter of UreC. The UreE protein probably delivers the nickel.</text>
</comment>
<comment type="subcellular location">
    <subcellularLocation>
        <location evidence="1">Cytoplasm</location>
    </subcellularLocation>
</comment>
<comment type="similarity">
    <text evidence="1">Belongs to the SIMIBI class G3E GTPase family. UreG subfamily.</text>
</comment>